<comment type="function">
    <text evidence="1">The alpha subunit is responsible for the aldol cleavage of indoleglycerol phosphate to indole and glyceraldehyde 3-phosphate.</text>
</comment>
<comment type="catalytic activity">
    <reaction evidence="1">
        <text>(1S,2R)-1-C-(indol-3-yl)glycerol 3-phosphate + L-serine = D-glyceraldehyde 3-phosphate + L-tryptophan + H2O</text>
        <dbReference type="Rhea" id="RHEA:10532"/>
        <dbReference type="ChEBI" id="CHEBI:15377"/>
        <dbReference type="ChEBI" id="CHEBI:33384"/>
        <dbReference type="ChEBI" id="CHEBI:57912"/>
        <dbReference type="ChEBI" id="CHEBI:58866"/>
        <dbReference type="ChEBI" id="CHEBI:59776"/>
        <dbReference type="EC" id="4.2.1.20"/>
    </reaction>
</comment>
<comment type="pathway">
    <text evidence="1">Amino-acid biosynthesis; L-tryptophan biosynthesis; L-tryptophan from chorismate: step 5/5.</text>
</comment>
<comment type="subunit">
    <text evidence="1">Tetramer of two alpha and two beta chains.</text>
</comment>
<comment type="similarity">
    <text evidence="1">Belongs to the TrpA family.</text>
</comment>
<dbReference type="EC" id="4.2.1.20" evidence="1"/>
<dbReference type="EMBL" id="CU928161">
    <property type="protein sequence ID" value="CAR02718.1"/>
    <property type="molecule type" value="Genomic_DNA"/>
</dbReference>
<dbReference type="RefSeq" id="WP_000443098.1">
    <property type="nucleotide sequence ID" value="NC_011742.1"/>
</dbReference>
<dbReference type="SMR" id="B7ML76"/>
<dbReference type="KEGG" id="ecz:ECS88_1395"/>
<dbReference type="HOGENOM" id="CLU_016734_0_4_6"/>
<dbReference type="UniPathway" id="UPA00035">
    <property type="reaction ID" value="UER00044"/>
</dbReference>
<dbReference type="Proteomes" id="UP000000747">
    <property type="component" value="Chromosome"/>
</dbReference>
<dbReference type="GO" id="GO:0005829">
    <property type="term" value="C:cytosol"/>
    <property type="evidence" value="ECO:0007669"/>
    <property type="project" value="TreeGrafter"/>
</dbReference>
<dbReference type="GO" id="GO:0004834">
    <property type="term" value="F:tryptophan synthase activity"/>
    <property type="evidence" value="ECO:0007669"/>
    <property type="project" value="UniProtKB-UniRule"/>
</dbReference>
<dbReference type="CDD" id="cd04724">
    <property type="entry name" value="Tryptophan_synthase_alpha"/>
    <property type="match status" value="1"/>
</dbReference>
<dbReference type="FunFam" id="3.20.20.70:FF:000037">
    <property type="entry name" value="Tryptophan synthase alpha chain"/>
    <property type="match status" value="1"/>
</dbReference>
<dbReference type="Gene3D" id="3.20.20.70">
    <property type="entry name" value="Aldolase class I"/>
    <property type="match status" value="1"/>
</dbReference>
<dbReference type="HAMAP" id="MF_00131">
    <property type="entry name" value="Trp_synth_alpha"/>
    <property type="match status" value="1"/>
</dbReference>
<dbReference type="InterPro" id="IPR013785">
    <property type="entry name" value="Aldolase_TIM"/>
</dbReference>
<dbReference type="InterPro" id="IPR011060">
    <property type="entry name" value="RibuloseP-bd_barrel"/>
</dbReference>
<dbReference type="InterPro" id="IPR018204">
    <property type="entry name" value="Trp_synthase_alpha_AS"/>
</dbReference>
<dbReference type="InterPro" id="IPR002028">
    <property type="entry name" value="Trp_synthase_suA"/>
</dbReference>
<dbReference type="NCBIfam" id="TIGR00262">
    <property type="entry name" value="trpA"/>
    <property type="match status" value="1"/>
</dbReference>
<dbReference type="PANTHER" id="PTHR43406:SF1">
    <property type="entry name" value="TRYPTOPHAN SYNTHASE ALPHA CHAIN, CHLOROPLASTIC"/>
    <property type="match status" value="1"/>
</dbReference>
<dbReference type="PANTHER" id="PTHR43406">
    <property type="entry name" value="TRYPTOPHAN SYNTHASE, ALPHA CHAIN"/>
    <property type="match status" value="1"/>
</dbReference>
<dbReference type="Pfam" id="PF00290">
    <property type="entry name" value="Trp_syntA"/>
    <property type="match status" value="1"/>
</dbReference>
<dbReference type="SUPFAM" id="SSF51366">
    <property type="entry name" value="Ribulose-phoshate binding barrel"/>
    <property type="match status" value="1"/>
</dbReference>
<dbReference type="PROSITE" id="PS00167">
    <property type="entry name" value="TRP_SYNTHASE_ALPHA"/>
    <property type="match status" value="1"/>
</dbReference>
<reference key="1">
    <citation type="journal article" date="2009" name="PLoS Genet.">
        <title>Organised genome dynamics in the Escherichia coli species results in highly diverse adaptive paths.</title>
        <authorList>
            <person name="Touchon M."/>
            <person name="Hoede C."/>
            <person name="Tenaillon O."/>
            <person name="Barbe V."/>
            <person name="Baeriswyl S."/>
            <person name="Bidet P."/>
            <person name="Bingen E."/>
            <person name="Bonacorsi S."/>
            <person name="Bouchier C."/>
            <person name="Bouvet O."/>
            <person name="Calteau A."/>
            <person name="Chiapello H."/>
            <person name="Clermont O."/>
            <person name="Cruveiller S."/>
            <person name="Danchin A."/>
            <person name="Diard M."/>
            <person name="Dossat C."/>
            <person name="Karoui M.E."/>
            <person name="Frapy E."/>
            <person name="Garry L."/>
            <person name="Ghigo J.M."/>
            <person name="Gilles A.M."/>
            <person name="Johnson J."/>
            <person name="Le Bouguenec C."/>
            <person name="Lescat M."/>
            <person name="Mangenot S."/>
            <person name="Martinez-Jehanne V."/>
            <person name="Matic I."/>
            <person name="Nassif X."/>
            <person name="Oztas S."/>
            <person name="Petit M.A."/>
            <person name="Pichon C."/>
            <person name="Rouy Z."/>
            <person name="Ruf C.S."/>
            <person name="Schneider D."/>
            <person name="Tourret J."/>
            <person name="Vacherie B."/>
            <person name="Vallenet D."/>
            <person name="Medigue C."/>
            <person name="Rocha E.P.C."/>
            <person name="Denamur E."/>
        </authorList>
    </citation>
    <scope>NUCLEOTIDE SEQUENCE [LARGE SCALE GENOMIC DNA]</scope>
    <source>
        <strain>S88 / ExPEC</strain>
    </source>
</reference>
<accession>B7ML76</accession>
<organism>
    <name type="scientific">Escherichia coli O45:K1 (strain S88 / ExPEC)</name>
    <dbReference type="NCBI Taxonomy" id="585035"/>
    <lineage>
        <taxon>Bacteria</taxon>
        <taxon>Pseudomonadati</taxon>
        <taxon>Pseudomonadota</taxon>
        <taxon>Gammaproteobacteria</taxon>
        <taxon>Enterobacterales</taxon>
        <taxon>Enterobacteriaceae</taxon>
        <taxon>Escherichia</taxon>
    </lineage>
</organism>
<proteinExistence type="inferred from homology"/>
<gene>
    <name evidence="1" type="primary">trpA</name>
    <name type="ordered locus">ECS88_1395</name>
</gene>
<evidence type="ECO:0000255" key="1">
    <source>
        <dbReference type="HAMAP-Rule" id="MF_00131"/>
    </source>
</evidence>
<feature type="chain" id="PRO_1000117736" description="Tryptophan synthase alpha chain">
    <location>
        <begin position="1"/>
        <end position="268"/>
    </location>
</feature>
<feature type="active site" description="Proton acceptor" evidence="1">
    <location>
        <position position="49"/>
    </location>
</feature>
<feature type="active site" description="Proton acceptor" evidence="1">
    <location>
        <position position="60"/>
    </location>
</feature>
<name>TRPA_ECO45</name>
<sequence length="268" mass="28695">MERYESLFTQLKERKEGAFVPFVTLGDPGIEQSLKIIDTLIEAGADALELGIPFSDPLADGPTIQNATLRAFAAGVTPAQCFEVLALIRQKHPTIPIGLLMYANLVFNKGIDEFYAECEKVGVDSVLVADVPVEESAPFRQAALRHNVAPIFICPPNADDDLLRQIASYGRGYTYLLSRAGVTGAENRAALPLNHLVAKLKEYNAAPPLQGFGISAPDQVKAAIDAGAAGAISGSAIVKIIEQHINEPEKMLAALKAFVQPMKAATRS</sequence>
<protein>
    <recommendedName>
        <fullName evidence="1">Tryptophan synthase alpha chain</fullName>
        <ecNumber evidence="1">4.2.1.20</ecNumber>
    </recommendedName>
</protein>
<keyword id="KW-0028">Amino-acid biosynthesis</keyword>
<keyword id="KW-0057">Aromatic amino acid biosynthesis</keyword>
<keyword id="KW-0456">Lyase</keyword>
<keyword id="KW-1185">Reference proteome</keyword>
<keyword id="KW-0822">Tryptophan biosynthesis</keyword>